<organism>
    <name type="scientific">Xenopus laevis</name>
    <name type="common">African clawed frog</name>
    <dbReference type="NCBI Taxonomy" id="8355"/>
    <lineage>
        <taxon>Eukaryota</taxon>
        <taxon>Metazoa</taxon>
        <taxon>Chordata</taxon>
        <taxon>Craniata</taxon>
        <taxon>Vertebrata</taxon>
        <taxon>Euteleostomi</taxon>
        <taxon>Amphibia</taxon>
        <taxon>Batrachia</taxon>
        <taxon>Anura</taxon>
        <taxon>Pipoidea</taxon>
        <taxon>Pipidae</taxon>
        <taxon>Xenopodinae</taxon>
        <taxon>Xenopus</taxon>
        <taxon>Xenopus</taxon>
    </lineage>
</organism>
<feature type="chain" id="PRO_0000309329" description="Rhotekin-2">
    <location>
        <begin position="1"/>
        <end position="612"/>
    </location>
</feature>
<feature type="domain" description="REM-1" evidence="2">
    <location>
        <begin position="3"/>
        <end position="79"/>
    </location>
</feature>
<feature type="domain" description="PH" evidence="1">
    <location>
        <begin position="285"/>
        <end position="392"/>
    </location>
</feature>
<feature type="region of interest" description="Disordered" evidence="3">
    <location>
        <begin position="483"/>
        <end position="530"/>
    </location>
</feature>
<feature type="region of interest" description="Disordered" evidence="3">
    <location>
        <begin position="574"/>
        <end position="612"/>
    </location>
</feature>
<feature type="compositionally biased region" description="Low complexity" evidence="3">
    <location>
        <begin position="486"/>
        <end position="498"/>
    </location>
</feature>
<proteinExistence type="evidence at transcript level"/>
<gene>
    <name type="primary">rtkn2</name>
    <name type="synonym">plekhk1</name>
</gene>
<dbReference type="EMBL" id="BC084302">
    <property type="protein sequence ID" value="AAH84302.1"/>
    <property type="molecule type" value="mRNA"/>
</dbReference>
<dbReference type="RefSeq" id="NP_001088285.1">
    <property type="nucleotide sequence ID" value="NM_001094816.1"/>
</dbReference>
<dbReference type="SMR" id="Q5XGX5"/>
<dbReference type="DNASU" id="495119"/>
<dbReference type="GeneID" id="495119"/>
<dbReference type="KEGG" id="xla:495119"/>
<dbReference type="AGR" id="Xenbase:XB-GENE-993322"/>
<dbReference type="CTD" id="495119"/>
<dbReference type="Xenbase" id="XB-GENE-993322">
    <property type="gene designation" value="rtkn2.L"/>
</dbReference>
<dbReference type="OrthoDB" id="5817051at2759"/>
<dbReference type="Proteomes" id="UP000186698">
    <property type="component" value="Chromosome 7L"/>
</dbReference>
<dbReference type="Bgee" id="495119">
    <property type="expression patterns" value="Expressed in blastula and 13 other cell types or tissues"/>
</dbReference>
<dbReference type="GO" id="GO:0030097">
    <property type="term" value="P:hemopoiesis"/>
    <property type="evidence" value="ECO:0000318"/>
    <property type="project" value="GO_Central"/>
</dbReference>
<dbReference type="GO" id="GO:0008284">
    <property type="term" value="P:positive regulation of cell population proliferation"/>
    <property type="evidence" value="ECO:0000318"/>
    <property type="project" value="GO_Central"/>
</dbReference>
<dbReference type="GO" id="GO:0007165">
    <property type="term" value="P:signal transduction"/>
    <property type="evidence" value="ECO:0007669"/>
    <property type="project" value="InterPro"/>
</dbReference>
<dbReference type="CDD" id="cd13249">
    <property type="entry name" value="PH_rhotekin2"/>
    <property type="match status" value="1"/>
</dbReference>
<dbReference type="FunFam" id="2.30.29.30:FF:000274">
    <property type="entry name" value="Rhotekin 2"/>
    <property type="match status" value="1"/>
</dbReference>
<dbReference type="Gene3D" id="2.30.29.30">
    <property type="entry name" value="Pleckstrin-homology domain (PH domain)/Phosphotyrosine-binding domain (PTB)"/>
    <property type="match status" value="1"/>
</dbReference>
<dbReference type="InterPro" id="IPR012966">
    <property type="entry name" value="AHD"/>
</dbReference>
<dbReference type="InterPro" id="IPR051364">
    <property type="entry name" value="Cytokinesis/Rho-signaling"/>
</dbReference>
<dbReference type="InterPro" id="IPR011072">
    <property type="entry name" value="HR1_rho-bd"/>
</dbReference>
<dbReference type="InterPro" id="IPR011993">
    <property type="entry name" value="PH-like_dom_sf"/>
</dbReference>
<dbReference type="InterPro" id="IPR001849">
    <property type="entry name" value="PH_domain"/>
</dbReference>
<dbReference type="PANTHER" id="PTHR21538">
    <property type="entry name" value="ANILLIN/RHOTEKIN RTKN"/>
    <property type="match status" value="1"/>
</dbReference>
<dbReference type="PANTHER" id="PTHR21538:SF21">
    <property type="entry name" value="RHOTEKIN-2"/>
    <property type="match status" value="1"/>
</dbReference>
<dbReference type="Pfam" id="PF08174">
    <property type="entry name" value="Anillin"/>
    <property type="match status" value="1"/>
</dbReference>
<dbReference type="Pfam" id="PF00169">
    <property type="entry name" value="PH"/>
    <property type="match status" value="1"/>
</dbReference>
<dbReference type="SMART" id="SM00742">
    <property type="entry name" value="Hr1"/>
    <property type="match status" value="1"/>
</dbReference>
<dbReference type="SMART" id="SM00233">
    <property type="entry name" value="PH"/>
    <property type="match status" value="1"/>
</dbReference>
<dbReference type="SUPFAM" id="SSF50729">
    <property type="entry name" value="PH domain-like"/>
    <property type="match status" value="1"/>
</dbReference>
<dbReference type="PROSITE" id="PS50003">
    <property type="entry name" value="PH_DOMAIN"/>
    <property type="match status" value="1"/>
</dbReference>
<dbReference type="PROSITE" id="PS51860">
    <property type="entry name" value="REM_1"/>
    <property type="match status" value="1"/>
</dbReference>
<sequence length="612" mass="69107">MEIKRKKIRESALFPREDDCLIQEKLDFEIRMRDGICKLLSVSSQKEQLLNAVKNLMVCNARIQNYTAQLRSQMGESNTGNTGRRSSDVGLNERQACPGKVAISGIRIPLMWKDSDHFSNKEKTQRHSVFCMLRLGPEIHDTDMVIVDKTMTDICFDNVTVFADARSDFQLKLELYSCCMEDSSIANTPKKLARKLRNSIGKSAGKKFNSELEATEPEAFLFSTPHMPGARYSLLAQITFTLDSIEDNFRTHSLTITGHEDSSFWLPLYGSMCCRLVAQPACLTDEAMMGFLNQQEMVGGLRSYTKFYCVLKGGNLLCYYTPEEINAKVEPALTVPINKETRIRAVGKDSKSRASSFSVINVVSGEAVTKVFSADCKEELQKWMEAFWQHFYDLSQWKHCSEKLMKINETSPQKPPLFLTREPASVYHDMSIGSPMKLESITDIIHNKIEETDGQFLIGPQEESAPAPWAALFDGNHQLHVERNKPPLLSSDDPSTSSNVKAKKRRAPPPPPNKTPFSKLVEGNDPSDKENIWSRASLVRKSFDTKLSAIMHQLQRPMVVPLTPAPPEKIEVTENKAELDTGTQEPIKPVPTPRQKSLREKLDPRVWLQSQV</sequence>
<name>RTKN2_XENLA</name>
<evidence type="ECO:0000255" key="1">
    <source>
        <dbReference type="PROSITE-ProRule" id="PRU00145"/>
    </source>
</evidence>
<evidence type="ECO:0000255" key="2">
    <source>
        <dbReference type="PROSITE-ProRule" id="PRU01207"/>
    </source>
</evidence>
<evidence type="ECO:0000256" key="3">
    <source>
        <dbReference type="SAM" id="MobiDB-lite"/>
    </source>
</evidence>
<reference key="1">
    <citation type="submission" date="2004-10" db="EMBL/GenBank/DDBJ databases">
        <authorList>
            <consortium name="NIH - Xenopus Gene Collection (XGC) project"/>
        </authorList>
    </citation>
    <scope>NUCLEOTIDE SEQUENCE [LARGE SCALE MRNA]</scope>
    <source>
        <tissue>Embryo</tissue>
    </source>
</reference>
<keyword id="KW-0175">Coiled coil</keyword>
<keyword id="KW-1185">Reference proteome</keyword>
<protein>
    <recommendedName>
        <fullName>Rhotekin-2</fullName>
    </recommendedName>
    <alternativeName>
        <fullName>Pleckstrin homology domain-containing family K member 1</fullName>
        <shortName>PH domain-containing family K member 1</shortName>
    </alternativeName>
</protein>
<accession>Q5XGX5</accession>